<dbReference type="EMBL" id="BC102088">
    <property type="protein sequence ID" value="AAI02089.1"/>
    <property type="molecule type" value="mRNA"/>
</dbReference>
<dbReference type="RefSeq" id="NP_001107981.1">
    <property type="nucleotide sequence ID" value="NM_001114509.2"/>
</dbReference>
<dbReference type="SMR" id="A8YXX7"/>
<dbReference type="FunCoup" id="A8YXX7">
    <property type="interactions" value="1"/>
</dbReference>
<dbReference type="STRING" id="9913.ENSBTAP00000028349"/>
<dbReference type="PaxDb" id="9913-ENSBTAP00000028349"/>
<dbReference type="GeneID" id="517889"/>
<dbReference type="KEGG" id="bta:517889"/>
<dbReference type="CTD" id="7033"/>
<dbReference type="VEuPathDB" id="HostDB:ENSBTAG00000021276"/>
<dbReference type="eggNOG" id="ENOG502SV7V">
    <property type="taxonomic scope" value="Eukaryota"/>
</dbReference>
<dbReference type="InParanoid" id="A8YXX7"/>
<dbReference type="OMA" id="QETECTF"/>
<dbReference type="OrthoDB" id="10051464at2759"/>
<dbReference type="Proteomes" id="UP000009136">
    <property type="component" value="Chromosome 1"/>
</dbReference>
<dbReference type="Bgee" id="ENSBTAG00000021276">
    <property type="expression patterns" value="Expressed in urinary bladder and 79 other cell types or tissues"/>
</dbReference>
<dbReference type="GO" id="GO:0005615">
    <property type="term" value="C:extracellular space"/>
    <property type="evidence" value="ECO:0000318"/>
    <property type="project" value="GO_Central"/>
</dbReference>
<dbReference type="GO" id="GO:0030141">
    <property type="term" value="C:secretory granule"/>
    <property type="evidence" value="ECO:0007669"/>
    <property type="project" value="Ensembl"/>
</dbReference>
<dbReference type="GO" id="GO:0042802">
    <property type="term" value="F:identical protein binding"/>
    <property type="evidence" value="ECO:0007669"/>
    <property type="project" value="Ensembl"/>
</dbReference>
<dbReference type="GO" id="GO:0030277">
    <property type="term" value="P:maintenance of gastrointestinal epithelium"/>
    <property type="evidence" value="ECO:0000318"/>
    <property type="project" value="GO_Central"/>
</dbReference>
<dbReference type="GO" id="GO:0010906">
    <property type="term" value="P:regulation of glucose metabolic process"/>
    <property type="evidence" value="ECO:0007669"/>
    <property type="project" value="Ensembl"/>
</dbReference>
<dbReference type="CDD" id="cd00111">
    <property type="entry name" value="Trefoil"/>
    <property type="match status" value="1"/>
</dbReference>
<dbReference type="FunFam" id="4.10.110.10:FF:000001">
    <property type="entry name" value="Trefoil factor 3"/>
    <property type="match status" value="1"/>
</dbReference>
<dbReference type="Gene3D" id="4.10.110.10">
    <property type="entry name" value="Spasmolytic Protein, domain 1"/>
    <property type="match status" value="1"/>
</dbReference>
<dbReference type="InterPro" id="IPR017994">
    <property type="entry name" value="P_trefoil_chordata"/>
</dbReference>
<dbReference type="InterPro" id="IPR017957">
    <property type="entry name" value="P_trefoil_CS"/>
</dbReference>
<dbReference type="InterPro" id="IPR000519">
    <property type="entry name" value="P_trefoil_dom"/>
</dbReference>
<dbReference type="InterPro" id="IPR044913">
    <property type="entry name" value="P_trefoil_dom_sf"/>
</dbReference>
<dbReference type="PANTHER" id="PTHR13826">
    <property type="entry name" value="INTESTINAL TREFOIL FACTOR-RELATED"/>
    <property type="match status" value="1"/>
</dbReference>
<dbReference type="PANTHER" id="PTHR13826:SF16">
    <property type="entry name" value="TREFOIL FACTOR 3"/>
    <property type="match status" value="1"/>
</dbReference>
<dbReference type="Pfam" id="PF00088">
    <property type="entry name" value="Trefoil"/>
    <property type="match status" value="1"/>
</dbReference>
<dbReference type="PRINTS" id="PR00680">
    <property type="entry name" value="PTREFOIL"/>
</dbReference>
<dbReference type="SMART" id="SM00018">
    <property type="entry name" value="PD"/>
    <property type="match status" value="1"/>
</dbReference>
<dbReference type="SUPFAM" id="SSF57492">
    <property type="entry name" value="Trefoil"/>
    <property type="match status" value="1"/>
</dbReference>
<dbReference type="PROSITE" id="PS00025">
    <property type="entry name" value="P_TREFOIL_1"/>
    <property type="match status" value="1"/>
</dbReference>
<dbReference type="PROSITE" id="PS51448">
    <property type="entry name" value="P_TREFOIL_2"/>
    <property type="match status" value="1"/>
</dbReference>
<organism>
    <name type="scientific">Bos taurus</name>
    <name type="common">Bovine</name>
    <dbReference type="NCBI Taxonomy" id="9913"/>
    <lineage>
        <taxon>Eukaryota</taxon>
        <taxon>Metazoa</taxon>
        <taxon>Chordata</taxon>
        <taxon>Craniata</taxon>
        <taxon>Vertebrata</taxon>
        <taxon>Euteleostomi</taxon>
        <taxon>Mammalia</taxon>
        <taxon>Eutheria</taxon>
        <taxon>Laurasiatheria</taxon>
        <taxon>Artiodactyla</taxon>
        <taxon>Ruminantia</taxon>
        <taxon>Pecora</taxon>
        <taxon>Bovidae</taxon>
        <taxon>Bovinae</taxon>
        <taxon>Bos</taxon>
    </lineage>
</organism>
<protein>
    <recommendedName>
        <fullName>Trefoil factor 3</fullName>
    </recommendedName>
    <alternativeName>
        <fullName>Intestinal trefoil factor</fullName>
    </alternativeName>
</protein>
<name>TFF3_BOVIN</name>
<sequence length="81" mass="8791">MEARTFWLLVVAVLALGSSSSTGQYVGLSANQCAVPAKDRVDCGYPEVTPEQCNNRGCCFDSSIHGVPWCFKPLQEAECTF</sequence>
<feature type="signal peptide" evidence="3">
    <location>
        <begin position="1"/>
        <end position="23"/>
    </location>
</feature>
<feature type="chain" id="PRO_0000376809" description="Trefoil factor 3">
    <location>
        <begin position="24"/>
        <end position="81"/>
    </location>
</feature>
<feature type="domain" description="P-type" evidence="4">
    <location>
        <begin position="31"/>
        <end position="74"/>
    </location>
</feature>
<feature type="disulfide bond" evidence="4">
    <location>
        <begin position="33"/>
        <end position="59"/>
    </location>
</feature>
<feature type="disulfide bond" evidence="4">
    <location>
        <begin position="43"/>
        <end position="58"/>
    </location>
</feature>
<feature type="disulfide bond" evidence="4">
    <location>
        <begin position="53"/>
        <end position="70"/>
    </location>
</feature>
<feature type="disulfide bond" description="Interchain" evidence="4">
    <location>
        <position position="79"/>
    </location>
</feature>
<accession>A8YXX7</accession>
<proteinExistence type="inferred from homology"/>
<reference key="1">
    <citation type="submission" date="2005-08" db="EMBL/GenBank/DDBJ databases">
        <authorList>
            <consortium name="NIH - Mammalian Gene Collection (MGC) project"/>
        </authorList>
    </citation>
    <scope>NUCLEOTIDE SEQUENCE [LARGE SCALE MRNA]</scope>
    <source>
        <strain>Crossbred X Angus</strain>
        <tissue>Ileum</tissue>
    </source>
</reference>
<gene>
    <name type="primary">TFF3</name>
    <name type="synonym">ITF</name>
</gene>
<comment type="function">
    <text evidence="1">Involved in the maintenance and repair of the intestinal mucosa. Promotes the mobility of epithelial cells in healing processes (motogen) (By similarity).</text>
</comment>
<comment type="subunit">
    <text evidence="1">Monomer. Homodimer; disulfide-linked.</text>
</comment>
<comment type="subcellular location">
    <subcellularLocation>
        <location evidence="2">Secreted</location>
        <location evidence="2">Extracellular space</location>
        <location evidence="2">Extracellular matrix</location>
    </subcellularLocation>
    <subcellularLocation>
        <location evidence="2">Cytoplasm</location>
    </subcellularLocation>
</comment>
<evidence type="ECO:0000250" key="1"/>
<evidence type="ECO:0000250" key="2">
    <source>
        <dbReference type="UniProtKB" id="Q07654"/>
    </source>
</evidence>
<evidence type="ECO:0000255" key="3"/>
<evidence type="ECO:0000255" key="4">
    <source>
        <dbReference type="PROSITE-ProRule" id="PRU00779"/>
    </source>
</evidence>
<keyword id="KW-0963">Cytoplasm</keyword>
<keyword id="KW-1015">Disulfide bond</keyword>
<keyword id="KW-0272">Extracellular matrix</keyword>
<keyword id="KW-1185">Reference proteome</keyword>
<keyword id="KW-0964">Secreted</keyword>
<keyword id="KW-0732">Signal</keyword>